<keyword id="KW-0028">Amino-acid biosynthesis</keyword>
<keyword id="KW-0057">Aromatic amino acid biosynthesis</keyword>
<keyword id="KW-0521">NADP</keyword>
<keyword id="KW-0560">Oxidoreductase</keyword>
<keyword id="KW-1185">Reference proteome</keyword>
<reference key="1">
    <citation type="journal article" date="2005" name="Genome Res.">
        <title>Complete genome sequence of the hyperthermophilic archaeon Thermococcus kodakaraensis KOD1 and comparison with Pyrococcus genomes.</title>
        <authorList>
            <person name="Fukui T."/>
            <person name="Atomi H."/>
            <person name="Kanai T."/>
            <person name="Matsumi R."/>
            <person name="Fujiwara S."/>
            <person name="Imanaka T."/>
        </authorList>
    </citation>
    <scope>NUCLEOTIDE SEQUENCE [LARGE SCALE GENOMIC DNA]</scope>
    <source>
        <strain>ATCC BAA-918 / JCM 12380 / KOD1</strain>
    </source>
</reference>
<evidence type="ECO:0000255" key="1">
    <source>
        <dbReference type="HAMAP-Rule" id="MF_00222"/>
    </source>
</evidence>
<accession>Q5JFT1</accession>
<comment type="function">
    <text evidence="1">Involved in the biosynthesis of the chorismate, which leads to the biosynthesis of aromatic amino acids. Catalyzes the reversible NADPH linked reduction of 3-dehydroshikimate (DHSA) to yield shikimate (SA).</text>
</comment>
<comment type="catalytic activity">
    <reaction evidence="1">
        <text>shikimate + NADP(+) = 3-dehydroshikimate + NADPH + H(+)</text>
        <dbReference type="Rhea" id="RHEA:17737"/>
        <dbReference type="ChEBI" id="CHEBI:15378"/>
        <dbReference type="ChEBI" id="CHEBI:16630"/>
        <dbReference type="ChEBI" id="CHEBI:36208"/>
        <dbReference type="ChEBI" id="CHEBI:57783"/>
        <dbReference type="ChEBI" id="CHEBI:58349"/>
        <dbReference type="EC" id="1.1.1.25"/>
    </reaction>
</comment>
<comment type="pathway">
    <text evidence="1">Metabolic intermediate biosynthesis; chorismate biosynthesis; chorismate from D-erythrose 4-phosphate and phosphoenolpyruvate: step 4/7.</text>
</comment>
<comment type="subunit">
    <text evidence="1">Homodimer.</text>
</comment>
<comment type="similarity">
    <text evidence="1">Belongs to the shikimate dehydrogenase family.</text>
</comment>
<sequence length="272" mass="29522">MADAETRLYGVIGFPARHSLSPVMHNAAFRALGINAVYLAFEVPPEELGEAIGGAKALGISGLNVTMPHKEAVIHFLDSLSEDSGEIGSVNTVVNRKGRLEGHTTDGLGARRALERAIELGGRRILIIGAGGAGKAIAYELSRDNEVVVLNRTPEKAKALERFGITGDALNRENLGEYLEWAEVLINATSVGMNSWETPVPAELLRRDLVVMDIVYKPLKTRLLTEAELRGCKTVDGLWMLVYQGIESFRLWTGFKPDEGLMRGAALEGISE</sequence>
<organism>
    <name type="scientific">Thermococcus kodakarensis (strain ATCC BAA-918 / JCM 12380 / KOD1)</name>
    <name type="common">Pyrococcus kodakaraensis (strain KOD1)</name>
    <dbReference type="NCBI Taxonomy" id="69014"/>
    <lineage>
        <taxon>Archaea</taxon>
        <taxon>Methanobacteriati</taxon>
        <taxon>Methanobacteriota</taxon>
        <taxon>Thermococci</taxon>
        <taxon>Thermococcales</taxon>
        <taxon>Thermococcaceae</taxon>
        <taxon>Thermococcus</taxon>
    </lineage>
</organism>
<dbReference type="EC" id="1.1.1.25" evidence="1"/>
<dbReference type="EMBL" id="AP006878">
    <property type="protein sequence ID" value="BAD84454.1"/>
    <property type="molecule type" value="Genomic_DNA"/>
</dbReference>
<dbReference type="RefSeq" id="WP_011249220.1">
    <property type="nucleotide sequence ID" value="NC_006624.1"/>
</dbReference>
<dbReference type="SMR" id="Q5JFT1"/>
<dbReference type="FunCoup" id="Q5JFT1">
    <property type="interactions" value="62"/>
</dbReference>
<dbReference type="STRING" id="69014.TK0265"/>
<dbReference type="EnsemblBacteria" id="BAD84454">
    <property type="protein sequence ID" value="BAD84454"/>
    <property type="gene ID" value="TK0265"/>
</dbReference>
<dbReference type="GeneID" id="78446768"/>
<dbReference type="KEGG" id="tko:TK0265"/>
<dbReference type="PATRIC" id="fig|69014.16.peg.264"/>
<dbReference type="eggNOG" id="arCOG01033">
    <property type="taxonomic scope" value="Archaea"/>
</dbReference>
<dbReference type="HOGENOM" id="CLU_044063_1_1_2"/>
<dbReference type="InParanoid" id="Q5JFT1"/>
<dbReference type="OrthoDB" id="8744at2157"/>
<dbReference type="PhylomeDB" id="Q5JFT1"/>
<dbReference type="UniPathway" id="UPA00053">
    <property type="reaction ID" value="UER00087"/>
</dbReference>
<dbReference type="Proteomes" id="UP000000536">
    <property type="component" value="Chromosome"/>
</dbReference>
<dbReference type="GO" id="GO:0050661">
    <property type="term" value="F:NADP binding"/>
    <property type="evidence" value="ECO:0007669"/>
    <property type="project" value="InterPro"/>
</dbReference>
<dbReference type="GO" id="GO:0004764">
    <property type="term" value="F:shikimate 3-dehydrogenase (NADP+) activity"/>
    <property type="evidence" value="ECO:0000318"/>
    <property type="project" value="GO_Central"/>
</dbReference>
<dbReference type="GO" id="GO:0008652">
    <property type="term" value="P:amino acid biosynthetic process"/>
    <property type="evidence" value="ECO:0007669"/>
    <property type="project" value="UniProtKB-KW"/>
</dbReference>
<dbReference type="GO" id="GO:0009073">
    <property type="term" value="P:aromatic amino acid family biosynthetic process"/>
    <property type="evidence" value="ECO:0007669"/>
    <property type="project" value="UniProtKB-KW"/>
</dbReference>
<dbReference type="GO" id="GO:0009423">
    <property type="term" value="P:chorismate biosynthetic process"/>
    <property type="evidence" value="ECO:0000318"/>
    <property type="project" value="GO_Central"/>
</dbReference>
<dbReference type="GO" id="GO:0019632">
    <property type="term" value="P:shikimate metabolic process"/>
    <property type="evidence" value="ECO:0000318"/>
    <property type="project" value="GO_Central"/>
</dbReference>
<dbReference type="CDD" id="cd01065">
    <property type="entry name" value="NAD_bind_Shikimate_DH"/>
    <property type="match status" value="1"/>
</dbReference>
<dbReference type="FunFam" id="3.40.50.720:FF:000086">
    <property type="entry name" value="Quinate/shikimate dehydrogenase"/>
    <property type="match status" value="1"/>
</dbReference>
<dbReference type="Gene3D" id="3.40.50.10860">
    <property type="entry name" value="Leucine Dehydrogenase, chain A, domain 1"/>
    <property type="match status" value="1"/>
</dbReference>
<dbReference type="Gene3D" id="3.40.50.720">
    <property type="entry name" value="NAD(P)-binding Rossmann-like Domain"/>
    <property type="match status" value="1"/>
</dbReference>
<dbReference type="HAMAP" id="MF_00222">
    <property type="entry name" value="Shikimate_DH_AroE"/>
    <property type="match status" value="1"/>
</dbReference>
<dbReference type="InterPro" id="IPR046346">
    <property type="entry name" value="Aminoacid_DH-like_N_sf"/>
</dbReference>
<dbReference type="InterPro" id="IPR036291">
    <property type="entry name" value="NAD(P)-bd_dom_sf"/>
</dbReference>
<dbReference type="InterPro" id="IPR041121">
    <property type="entry name" value="SDH_C"/>
</dbReference>
<dbReference type="InterPro" id="IPR011342">
    <property type="entry name" value="Shikimate_DH"/>
</dbReference>
<dbReference type="InterPro" id="IPR013708">
    <property type="entry name" value="Shikimate_DH-bd_N"/>
</dbReference>
<dbReference type="InterPro" id="IPR022893">
    <property type="entry name" value="Shikimate_DH_fam"/>
</dbReference>
<dbReference type="InterPro" id="IPR006151">
    <property type="entry name" value="Shikm_DH/Glu-tRNA_Rdtase"/>
</dbReference>
<dbReference type="NCBIfam" id="TIGR00507">
    <property type="entry name" value="aroE"/>
    <property type="match status" value="1"/>
</dbReference>
<dbReference type="NCBIfam" id="NF001319">
    <property type="entry name" value="PRK00258.3-3"/>
    <property type="match status" value="1"/>
</dbReference>
<dbReference type="PANTHER" id="PTHR21089:SF1">
    <property type="entry name" value="BIFUNCTIONAL 3-DEHYDROQUINATE DEHYDRATASE_SHIKIMATE DEHYDROGENASE, CHLOROPLASTIC"/>
    <property type="match status" value="1"/>
</dbReference>
<dbReference type="PANTHER" id="PTHR21089">
    <property type="entry name" value="SHIKIMATE DEHYDROGENASE"/>
    <property type="match status" value="1"/>
</dbReference>
<dbReference type="Pfam" id="PF18317">
    <property type="entry name" value="SDH_C"/>
    <property type="match status" value="1"/>
</dbReference>
<dbReference type="Pfam" id="PF01488">
    <property type="entry name" value="Shikimate_DH"/>
    <property type="match status" value="1"/>
</dbReference>
<dbReference type="Pfam" id="PF08501">
    <property type="entry name" value="Shikimate_dh_N"/>
    <property type="match status" value="1"/>
</dbReference>
<dbReference type="SUPFAM" id="SSF53223">
    <property type="entry name" value="Aminoacid dehydrogenase-like, N-terminal domain"/>
    <property type="match status" value="1"/>
</dbReference>
<dbReference type="SUPFAM" id="SSF51735">
    <property type="entry name" value="NAD(P)-binding Rossmann-fold domains"/>
    <property type="match status" value="1"/>
</dbReference>
<feature type="chain" id="PRO_0000136067" description="Shikimate dehydrogenase (NADP(+))">
    <location>
        <begin position="1"/>
        <end position="272"/>
    </location>
</feature>
<feature type="active site" description="Proton acceptor" evidence="1">
    <location>
        <position position="70"/>
    </location>
</feature>
<feature type="binding site" evidence="1">
    <location>
        <begin position="19"/>
        <end position="21"/>
    </location>
    <ligand>
        <name>shikimate</name>
        <dbReference type="ChEBI" id="CHEBI:36208"/>
    </ligand>
</feature>
<feature type="binding site" evidence="1">
    <location>
        <position position="66"/>
    </location>
    <ligand>
        <name>shikimate</name>
        <dbReference type="ChEBI" id="CHEBI:36208"/>
    </ligand>
</feature>
<feature type="binding site" evidence="1">
    <location>
        <position position="82"/>
    </location>
    <ligand>
        <name>NADP(+)</name>
        <dbReference type="ChEBI" id="CHEBI:58349"/>
    </ligand>
</feature>
<feature type="binding site" evidence="1">
    <location>
        <position position="91"/>
    </location>
    <ligand>
        <name>shikimate</name>
        <dbReference type="ChEBI" id="CHEBI:36208"/>
    </ligand>
</feature>
<feature type="binding site" evidence="1">
    <location>
        <position position="106"/>
    </location>
    <ligand>
        <name>shikimate</name>
        <dbReference type="ChEBI" id="CHEBI:36208"/>
    </ligand>
</feature>
<feature type="binding site" evidence="1">
    <location>
        <begin position="129"/>
        <end position="133"/>
    </location>
    <ligand>
        <name>NADP(+)</name>
        <dbReference type="ChEBI" id="CHEBI:58349"/>
    </ligand>
</feature>
<feature type="binding site" evidence="1">
    <location>
        <begin position="151"/>
        <end position="156"/>
    </location>
    <ligand>
        <name>NADP(+)</name>
        <dbReference type="ChEBI" id="CHEBI:58349"/>
    </ligand>
</feature>
<feature type="binding site" evidence="1">
    <location>
        <position position="214"/>
    </location>
    <ligand>
        <name>NADP(+)</name>
        <dbReference type="ChEBI" id="CHEBI:58349"/>
    </ligand>
</feature>
<feature type="binding site" evidence="1">
    <location>
        <position position="216"/>
    </location>
    <ligand>
        <name>shikimate</name>
        <dbReference type="ChEBI" id="CHEBI:36208"/>
    </ligand>
</feature>
<feature type="binding site" evidence="1">
    <location>
        <position position="237"/>
    </location>
    <ligand>
        <name>NADP(+)</name>
        <dbReference type="ChEBI" id="CHEBI:58349"/>
    </ligand>
</feature>
<protein>
    <recommendedName>
        <fullName evidence="1">Shikimate dehydrogenase (NADP(+))</fullName>
        <shortName evidence="1">SDH</shortName>
        <ecNumber evidence="1">1.1.1.25</ecNumber>
    </recommendedName>
</protein>
<name>AROE_THEKO</name>
<gene>
    <name evidence="1" type="primary">aroE</name>
    <name type="ordered locus">TK0265</name>
</gene>
<proteinExistence type="inferred from homology"/>